<name>RL9_AGARV</name>
<accession>C4ZDL0</accession>
<feature type="chain" id="PRO_1000206548" description="Large ribosomal subunit protein bL9">
    <location>
        <begin position="1"/>
        <end position="148"/>
    </location>
</feature>
<reference key="1">
    <citation type="journal article" date="2009" name="Proc. Natl. Acad. Sci. U.S.A.">
        <title>Characterizing a model human gut microbiota composed of members of its two dominant bacterial phyla.</title>
        <authorList>
            <person name="Mahowald M.A."/>
            <person name="Rey F.E."/>
            <person name="Seedorf H."/>
            <person name="Turnbaugh P.J."/>
            <person name="Fulton R.S."/>
            <person name="Wollam A."/>
            <person name="Shah N."/>
            <person name="Wang C."/>
            <person name="Magrini V."/>
            <person name="Wilson R.K."/>
            <person name="Cantarel B.L."/>
            <person name="Coutinho P.M."/>
            <person name="Henrissat B."/>
            <person name="Crock L.W."/>
            <person name="Russell A."/>
            <person name="Verberkmoes N.C."/>
            <person name="Hettich R.L."/>
            <person name="Gordon J.I."/>
        </authorList>
    </citation>
    <scope>NUCLEOTIDE SEQUENCE [LARGE SCALE GENOMIC DNA]</scope>
    <source>
        <strain>ATCC 33656 / DSM 3377 / JCM 17463 / KCTC 5835 / LMG 30912 / VPI 0990</strain>
    </source>
</reference>
<dbReference type="EMBL" id="CP001107">
    <property type="protein sequence ID" value="ACR76986.1"/>
    <property type="molecule type" value="Genomic_DNA"/>
</dbReference>
<dbReference type="RefSeq" id="WP_012744013.1">
    <property type="nucleotide sequence ID" value="NZ_CAXSYD010000008.1"/>
</dbReference>
<dbReference type="SMR" id="C4ZDL0"/>
<dbReference type="STRING" id="515619.EUBREC_3259"/>
<dbReference type="PaxDb" id="515619-EUBREC_3259"/>
<dbReference type="GeneID" id="86989921"/>
<dbReference type="KEGG" id="ere:EUBREC_3259"/>
<dbReference type="HOGENOM" id="CLU_078938_3_0_9"/>
<dbReference type="Proteomes" id="UP000001477">
    <property type="component" value="Chromosome"/>
</dbReference>
<dbReference type="GO" id="GO:1990904">
    <property type="term" value="C:ribonucleoprotein complex"/>
    <property type="evidence" value="ECO:0007669"/>
    <property type="project" value="UniProtKB-KW"/>
</dbReference>
<dbReference type="GO" id="GO:0005840">
    <property type="term" value="C:ribosome"/>
    <property type="evidence" value="ECO:0007669"/>
    <property type="project" value="UniProtKB-KW"/>
</dbReference>
<dbReference type="GO" id="GO:0019843">
    <property type="term" value="F:rRNA binding"/>
    <property type="evidence" value="ECO:0007669"/>
    <property type="project" value="UniProtKB-UniRule"/>
</dbReference>
<dbReference type="GO" id="GO:0003735">
    <property type="term" value="F:structural constituent of ribosome"/>
    <property type="evidence" value="ECO:0007669"/>
    <property type="project" value="InterPro"/>
</dbReference>
<dbReference type="GO" id="GO:0006412">
    <property type="term" value="P:translation"/>
    <property type="evidence" value="ECO:0007669"/>
    <property type="project" value="UniProtKB-UniRule"/>
</dbReference>
<dbReference type="Gene3D" id="3.10.430.100">
    <property type="entry name" value="Ribosomal protein L9, C-terminal domain"/>
    <property type="match status" value="1"/>
</dbReference>
<dbReference type="Gene3D" id="3.40.5.10">
    <property type="entry name" value="Ribosomal protein L9, N-terminal domain"/>
    <property type="match status" value="1"/>
</dbReference>
<dbReference type="HAMAP" id="MF_00503">
    <property type="entry name" value="Ribosomal_bL9"/>
    <property type="match status" value="1"/>
</dbReference>
<dbReference type="InterPro" id="IPR000244">
    <property type="entry name" value="Ribosomal_bL9"/>
</dbReference>
<dbReference type="InterPro" id="IPR009027">
    <property type="entry name" value="Ribosomal_bL9/RNase_H1_N"/>
</dbReference>
<dbReference type="InterPro" id="IPR020594">
    <property type="entry name" value="Ribosomal_bL9_bac/chp"/>
</dbReference>
<dbReference type="InterPro" id="IPR020069">
    <property type="entry name" value="Ribosomal_bL9_C"/>
</dbReference>
<dbReference type="InterPro" id="IPR036791">
    <property type="entry name" value="Ribosomal_bL9_C_sf"/>
</dbReference>
<dbReference type="InterPro" id="IPR020070">
    <property type="entry name" value="Ribosomal_bL9_N"/>
</dbReference>
<dbReference type="InterPro" id="IPR036935">
    <property type="entry name" value="Ribosomal_bL9_N_sf"/>
</dbReference>
<dbReference type="NCBIfam" id="TIGR00158">
    <property type="entry name" value="L9"/>
    <property type="match status" value="1"/>
</dbReference>
<dbReference type="PANTHER" id="PTHR21368">
    <property type="entry name" value="50S RIBOSOMAL PROTEIN L9"/>
    <property type="match status" value="1"/>
</dbReference>
<dbReference type="Pfam" id="PF03948">
    <property type="entry name" value="Ribosomal_L9_C"/>
    <property type="match status" value="1"/>
</dbReference>
<dbReference type="Pfam" id="PF01281">
    <property type="entry name" value="Ribosomal_L9_N"/>
    <property type="match status" value="1"/>
</dbReference>
<dbReference type="SUPFAM" id="SSF55658">
    <property type="entry name" value="L9 N-domain-like"/>
    <property type="match status" value="1"/>
</dbReference>
<dbReference type="SUPFAM" id="SSF55653">
    <property type="entry name" value="Ribosomal protein L9 C-domain"/>
    <property type="match status" value="1"/>
</dbReference>
<organism>
    <name type="scientific">Agathobacter rectalis (strain ATCC 33656 / DSM 3377 / JCM 17463 / KCTC 5835 / VPI 0990)</name>
    <name type="common">Eubacterium rectale</name>
    <dbReference type="NCBI Taxonomy" id="515619"/>
    <lineage>
        <taxon>Bacteria</taxon>
        <taxon>Bacillati</taxon>
        <taxon>Bacillota</taxon>
        <taxon>Clostridia</taxon>
        <taxon>Lachnospirales</taxon>
        <taxon>Lachnospiraceae</taxon>
        <taxon>Agathobacter</taxon>
    </lineage>
</organism>
<sequence>MKVILLQDVKPLGKKGEIVNVSDGYARNNIIPKKLGVEATPKNLNDLKLQNQHADKVAQENYESALALAKVVENTKVVVKLRSGEGGRTFGSISTKEISAAAKEQHGLELDKKKMQLNESIKALGNYEVPVKLHPKVTANLTVSVVEG</sequence>
<comment type="function">
    <text evidence="1">Binds to the 23S rRNA.</text>
</comment>
<comment type="similarity">
    <text evidence="1">Belongs to the bacterial ribosomal protein bL9 family.</text>
</comment>
<keyword id="KW-0687">Ribonucleoprotein</keyword>
<keyword id="KW-0689">Ribosomal protein</keyword>
<keyword id="KW-0694">RNA-binding</keyword>
<keyword id="KW-0699">rRNA-binding</keyword>
<gene>
    <name evidence="1" type="primary">rplI</name>
    <name type="ordered locus">EUBREC_3259</name>
</gene>
<proteinExistence type="inferred from homology"/>
<protein>
    <recommendedName>
        <fullName evidence="1">Large ribosomal subunit protein bL9</fullName>
    </recommendedName>
    <alternativeName>
        <fullName evidence="2">50S ribosomal protein L9</fullName>
    </alternativeName>
</protein>
<evidence type="ECO:0000255" key="1">
    <source>
        <dbReference type="HAMAP-Rule" id="MF_00503"/>
    </source>
</evidence>
<evidence type="ECO:0000305" key="2"/>